<proteinExistence type="evidence at protein level"/>
<reference key="1">
    <citation type="journal article" date="2008" name="Genome Res.">
        <title>Insights from the complete genome sequence of Mycobacterium marinum on the evolution of Mycobacterium tuberculosis.</title>
        <authorList>
            <person name="Stinear T.P."/>
            <person name="Seemann T."/>
            <person name="Harrison P.F."/>
            <person name="Jenkin G.A."/>
            <person name="Davies J.K."/>
            <person name="Johnson P.D."/>
            <person name="Abdellah Z."/>
            <person name="Arrowsmith C."/>
            <person name="Chillingworth T."/>
            <person name="Churcher C."/>
            <person name="Clarke K."/>
            <person name="Cronin A."/>
            <person name="Davis P."/>
            <person name="Goodhead I."/>
            <person name="Holroyd N."/>
            <person name="Jagels K."/>
            <person name="Lord A."/>
            <person name="Moule S."/>
            <person name="Mungall K."/>
            <person name="Norbertczak H."/>
            <person name="Quail M.A."/>
            <person name="Rabbinowitsch E."/>
            <person name="Walker D."/>
            <person name="White B."/>
            <person name="Whitehead S."/>
            <person name="Small P.L."/>
            <person name="Brosch R."/>
            <person name="Ramakrishnan L."/>
            <person name="Fischbach M.A."/>
            <person name="Parkhill J."/>
            <person name="Cole S.T."/>
        </authorList>
    </citation>
    <scope>NUCLEOTIDE SEQUENCE [LARGE SCALE GENOMIC DNA]</scope>
    <source>
        <strain>ATCC BAA-535 / M</strain>
    </source>
</reference>
<reference key="2">
    <citation type="submission" date="2011-06" db="PDB data bank">
        <title>Crystal structure of a putative uncharacterized protein from Mycobacterium marinum bound to adenosine 5'-monophosphate AMP.</title>
        <authorList>
            <consortium name="Seattle Structural Genomics Center for Infectious Disease (SSGCID)"/>
            <person name="Edwards T.E."/>
            <person name="Clifton M.C."/>
            <person name="Sankaran B."/>
            <person name="Moritz R.L."/>
            <person name="Johnson R.S."/>
            <person name="Stewart L.J."/>
        </authorList>
    </citation>
    <scope>X-RAY CRYSTALLOGRAPHY (2.50 ANGSTROMS) IN COMPLEX WITH AMP</scope>
    <source>
        <strain>ATCC BAA-535 / M</strain>
    </source>
</reference>
<name>LOGH_MYCMM</name>
<gene>
    <name evidence="4" type="ordered locus">MMAR_4233</name>
</gene>
<accession>B2HS63</accession>
<dbReference type="EC" id="3.2.2.n1" evidence="1"/>
<dbReference type="EMBL" id="CP000854">
    <property type="protein sequence ID" value="ACC42641.1"/>
    <property type="molecule type" value="Genomic_DNA"/>
</dbReference>
<dbReference type="RefSeq" id="WP_012395803.1">
    <property type="nucleotide sequence ID" value="NC_010612.1"/>
</dbReference>
<dbReference type="PDB" id="3SBX">
    <property type="method" value="X-ray"/>
    <property type="resolution" value="2.50 A"/>
    <property type="chains" value="A/B/C/D/E/F/G/H=2-186"/>
</dbReference>
<dbReference type="PDBsum" id="3SBX"/>
<dbReference type="SMR" id="B2HS63"/>
<dbReference type="STRING" id="216594.MMAR_4233"/>
<dbReference type="KEGG" id="mmi:MMAR_4233"/>
<dbReference type="eggNOG" id="COG1611">
    <property type="taxonomic scope" value="Bacteria"/>
</dbReference>
<dbReference type="HOGENOM" id="CLU_058336_4_0_11"/>
<dbReference type="OrthoDB" id="9801098at2"/>
<dbReference type="EvolutionaryTrace" id="B2HS63"/>
<dbReference type="Proteomes" id="UP000001190">
    <property type="component" value="Chromosome"/>
</dbReference>
<dbReference type="GO" id="GO:0005829">
    <property type="term" value="C:cytosol"/>
    <property type="evidence" value="ECO:0007669"/>
    <property type="project" value="TreeGrafter"/>
</dbReference>
<dbReference type="GO" id="GO:0102682">
    <property type="term" value="F:cytokinin riboside 5'-monophosphate phosphoribohydrolase activity"/>
    <property type="evidence" value="ECO:0007669"/>
    <property type="project" value="RHEA"/>
</dbReference>
<dbReference type="GO" id="GO:0000166">
    <property type="term" value="F:nucleotide binding"/>
    <property type="evidence" value="ECO:0007669"/>
    <property type="project" value="UniProtKB-KW"/>
</dbReference>
<dbReference type="GO" id="GO:0009691">
    <property type="term" value="P:cytokinin biosynthetic process"/>
    <property type="evidence" value="ECO:0007669"/>
    <property type="project" value="UniProtKB-KW"/>
</dbReference>
<dbReference type="Gene3D" id="3.40.50.450">
    <property type="match status" value="1"/>
</dbReference>
<dbReference type="InterPro" id="IPR005269">
    <property type="entry name" value="LOG"/>
</dbReference>
<dbReference type="InterPro" id="IPR031100">
    <property type="entry name" value="LOG_fam"/>
</dbReference>
<dbReference type="NCBIfam" id="TIGR00730">
    <property type="entry name" value="Rossman fold protein, TIGR00730 family"/>
    <property type="match status" value="1"/>
</dbReference>
<dbReference type="PANTHER" id="PTHR31223">
    <property type="entry name" value="LOG FAMILY PROTEIN YJL055W"/>
    <property type="match status" value="1"/>
</dbReference>
<dbReference type="PANTHER" id="PTHR31223:SF70">
    <property type="entry name" value="LOG FAMILY PROTEIN YJL055W"/>
    <property type="match status" value="1"/>
</dbReference>
<dbReference type="Pfam" id="PF03641">
    <property type="entry name" value="Lysine_decarbox"/>
    <property type="match status" value="1"/>
</dbReference>
<dbReference type="SUPFAM" id="SSF102405">
    <property type="entry name" value="MCP/YpsA-like"/>
    <property type="match status" value="1"/>
</dbReference>
<sequence length="187" mass="20031">MTAKSDEPGRWTVAVYCAAAPTHPELLELAGAVGAAIAARGWTLVWGGGHVSAMGAVSSAARAHGGWTVGVIPKMLVHRELADHDADELVVTETMWERKQVMEDRANAFITLPGGVGTLDELLDVWTEGYLGMHDKSIVVLDPWGHFDGLRAWLSELADTGYVSRTAMERLIVVDNLDDALQACAPG</sequence>
<keyword id="KW-0002">3D-structure</keyword>
<keyword id="KW-0203">Cytokinin biosynthesis</keyword>
<keyword id="KW-0378">Hydrolase</keyword>
<keyword id="KW-0547">Nucleotide-binding</keyword>
<keyword id="KW-1185">Reference proteome</keyword>
<organism>
    <name type="scientific">Mycobacterium marinum (strain ATCC BAA-535 / M)</name>
    <dbReference type="NCBI Taxonomy" id="216594"/>
    <lineage>
        <taxon>Bacteria</taxon>
        <taxon>Bacillati</taxon>
        <taxon>Actinomycetota</taxon>
        <taxon>Actinomycetes</taxon>
        <taxon>Mycobacteriales</taxon>
        <taxon>Mycobacteriaceae</taxon>
        <taxon>Mycobacterium</taxon>
        <taxon>Mycobacterium ulcerans group</taxon>
    </lineage>
</organism>
<protein>
    <recommendedName>
        <fullName evidence="1">Cytokinin riboside 5'-monophosphate phosphoribohydrolase</fullName>
        <ecNumber evidence="1">3.2.2.n1</ecNumber>
    </recommendedName>
    <alternativeName>
        <fullName>Protein LONELY GUY homolog</fullName>
        <shortName>LOG homolog</shortName>
    </alternativeName>
</protein>
<feature type="chain" id="PRO_0000433001" description="Cytokinin riboside 5'-monophosphate phosphoribohydrolase">
    <location>
        <begin position="1"/>
        <end position="187"/>
    </location>
</feature>
<feature type="binding site" evidence="3">
    <location>
        <position position="80"/>
    </location>
    <ligand>
        <name>substrate</name>
    </ligand>
</feature>
<feature type="binding site" evidence="3">
    <location>
        <begin position="98"/>
        <end position="99"/>
    </location>
    <ligand>
        <name>substrate</name>
    </ligand>
</feature>
<feature type="binding site" evidence="3">
    <location>
        <begin position="115"/>
        <end position="121"/>
    </location>
    <ligand>
        <name>substrate</name>
    </ligand>
</feature>
<feature type="binding site" evidence="3">
    <location>
        <position position="127"/>
    </location>
    <ligand>
        <name>substrate</name>
    </ligand>
</feature>
<feature type="strand" evidence="5">
    <location>
        <begin position="12"/>
        <end position="16"/>
    </location>
</feature>
<feature type="helix" evidence="5">
    <location>
        <begin position="24"/>
        <end position="39"/>
    </location>
</feature>
<feature type="strand" evidence="5">
    <location>
        <begin position="43"/>
        <end position="46"/>
    </location>
</feature>
<feature type="helix" evidence="5">
    <location>
        <begin position="52"/>
        <end position="62"/>
    </location>
</feature>
<feature type="turn" evidence="5">
    <location>
        <begin position="63"/>
        <end position="65"/>
    </location>
</feature>
<feature type="strand" evidence="5">
    <location>
        <begin position="68"/>
        <end position="73"/>
    </location>
</feature>
<feature type="turn" evidence="5">
    <location>
        <begin position="74"/>
        <end position="81"/>
    </location>
</feature>
<feature type="strand" evidence="5">
    <location>
        <begin position="87"/>
        <end position="94"/>
    </location>
</feature>
<feature type="helix" evidence="5">
    <location>
        <begin position="95"/>
        <end position="105"/>
    </location>
</feature>
<feature type="strand" evidence="5">
    <location>
        <begin position="107"/>
        <end position="111"/>
    </location>
</feature>
<feature type="helix" evidence="5">
    <location>
        <begin position="116"/>
        <end position="130"/>
    </location>
</feature>
<feature type="strand" evidence="5">
    <location>
        <begin position="138"/>
        <end position="141"/>
    </location>
</feature>
<feature type="helix" evidence="5">
    <location>
        <begin position="148"/>
        <end position="159"/>
    </location>
</feature>
<feature type="helix" evidence="5">
    <location>
        <begin position="165"/>
        <end position="170"/>
    </location>
</feature>
<feature type="strand" evidence="5">
    <location>
        <begin position="171"/>
        <end position="176"/>
    </location>
</feature>
<feature type="helix" evidence="5">
    <location>
        <begin position="177"/>
        <end position="184"/>
    </location>
</feature>
<evidence type="ECO:0000250" key="1">
    <source>
        <dbReference type="UniProtKB" id="O05306"/>
    </source>
</evidence>
<evidence type="ECO:0000305" key="2"/>
<evidence type="ECO:0000305" key="3">
    <source ref="2"/>
</evidence>
<evidence type="ECO:0000312" key="4">
    <source>
        <dbReference type="EMBL" id="ACC42641.1"/>
    </source>
</evidence>
<evidence type="ECO:0007829" key="5">
    <source>
        <dbReference type="PDB" id="3SBX"/>
    </source>
</evidence>
<comment type="function">
    <text evidence="1">Catalyzes the hydrolytic removal of ribose 5'-monophosphate from nitrogen N6-modified adenosines, the final step of bioactive cytokinin synthesis.</text>
</comment>
<comment type="catalytic activity">
    <reaction evidence="1">
        <text>N(6)-(dimethylallyl)adenosine 5'-phosphate + H2O = N(6)-dimethylallyladenine + D-ribose 5-phosphate</text>
        <dbReference type="Rhea" id="RHEA:48560"/>
        <dbReference type="ChEBI" id="CHEBI:15377"/>
        <dbReference type="ChEBI" id="CHEBI:17660"/>
        <dbReference type="ChEBI" id="CHEBI:57526"/>
        <dbReference type="ChEBI" id="CHEBI:78346"/>
        <dbReference type="EC" id="3.2.2.n1"/>
    </reaction>
</comment>
<comment type="catalytic activity">
    <reaction evidence="1">
        <text>9-ribosyl-trans-zeatin 5'-phosphate + H2O = trans-zeatin + D-ribose 5-phosphate</text>
        <dbReference type="Rhea" id="RHEA:48564"/>
        <dbReference type="ChEBI" id="CHEBI:15377"/>
        <dbReference type="ChEBI" id="CHEBI:16522"/>
        <dbReference type="ChEBI" id="CHEBI:78346"/>
        <dbReference type="ChEBI" id="CHEBI:87947"/>
        <dbReference type="EC" id="3.2.2.n1"/>
    </reaction>
</comment>
<comment type="similarity">
    <text evidence="2">Belongs to the LOG family.</text>
</comment>